<comment type="function">
    <text evidence="2">Cell wall formation.</text>
</comment>
<comment type="catalytic activity">
    <reaction evidence="2">
        <text>2 D-alanine + ATP = D-alanyl-D-alanine + ADP + phosphate + H(+)</text>
        <dbReference type="Rhea" id="RHEA:11224"/>
        <dbReference type="ChEBI" id="CHEBI:15378"/>
        <dbReference type="ChEBI" id="CHEBI:30616"/>
        <dbReference type="ChEBI" id="CHEBI:43474"/>
        <dbReference type="ChEBI" id="CHEBI:57416"/>
        <dbReference type="ChEBI" id="CHEBI:57822"/>
        <dbReference type="ChEBI" id="CHEBI:456216"/>
        <dbReference type="EC" id="6.3.2.4"/>
    </reaction>
</comment>
<comment type="cofactor">
    <cofactor evidence="1">
        <name>Mg(2+)</name>
        <dbReference type="ChEBI" id="CHEBI:18420"/>
    </cofactor>
    <cofactor evidence="1">
        <name>Mn(2+)</name>
        <dbReference type="ChEBI" id="CHEBI:29035"/>
    </cofactor>
    <text evidence="1">Binds 2 magnesium or manganese ions per subunit.</text>
</comment>
<comment type="pathway">
    <text evidence="2">Cell wall biogenesis; peptidoglycan biosynthesis.</text>
</comment>
<comment type="subcellular location">
    <subcellularLocation>
        <location evidence="2">Cytoplasm</location>
    </subcellularLocation>
</comment>
<comment type="similarity">
    <text evidence="2">Belongs to the D-alanine--D-alanine ligase family.</text>
</comment>
<keyword id="KW-0067">ATP-binding</keyword>
<keyword id="KW-0133">Cell shape</keyword>
<keyword id="KW-0961">Cell wall biogenesis/degradation</keyword>
<keyword id="KW-0963">Cytoplasm</keyword>
<keyword id="KW-0436">Ligase</keyword>
<keyword id="KW-0460">Magnesium</keyword>
<keyword id="KW-0464">Manganese</keyword>
<keyword id="KW-0479">Metal-binding</keyword>
<keyword id="KW-0547">Nucleotide-binding</keyword>
<keyword id="KW-0573">Peptidoglycan synthesis</keyword>
<name>DDL_CLOB1</name>
<accession>A7FPH8</accession>
<feature type="chain" id="PRO_1000030438" description="D-alanine--D-alanine ligase">
    <location>
        <begin position="1"/>
        <end position="300"/>
    </location>
</feature>
<feature type="domain" description="ATP-grasp" evidence="2">
    <location>
        <begin position="99"/>
        <end position="293"/>
    </location>
</feature>
<feature type="binding site" evidence="2">
    <location>
        <begin position="126"/>
        <end position="181"/>
    </location>
    <ligand>
        <name>ATP</name>
        <dbReference type="ChEBI" id="CHEBI:30616"/>
    </ligand>
</feature>
<feature type="binding site" evidence="2">
    <location>
        <position position="248"/>
    </location>
    <ligand>
        <name>Mg(2+)</name>
        <dbReference type="ChEBI" id="CHEBI:18420"/>
        <label>1</label>
    </ligand>
</feature>
<feature type="binding site" evidence="2">
    <location>
        <position position="260"/>
    </location>
    <ligand>
        <name>Mg(2+)</name>
        <dbReference type="ChEBI" id="CHEBI:18420"/>
        <label>1</label>
    </ligand>
</feature>
<feature type="binding site" evidence="2">
    <location>
        <position position="260"/>
    </location>
    <ligand>
        <name>Mg(2+)</name>
        <dbReference type="ChEBI" id="CHEBI:18420"/>
        <label>2</label>
    </ligand>
</feature>
<feature type="binding site" evidence="2">
    <location>
        <position position="262"/>
    </location>
    <ligand>
        <name>Mg(2+)</name>
        <dbReference type="ChEBI" id="CHEBI:18420"/>
        <label>2</label>
    </ligand>
</feature>
<protein>
    <recommendedName>
        <fullName evidence="2">D-alanine--D-alanine ligase</fullName>
        <ecNumber evidence="2">6.3.2.4</ecNumber>
    </recommendedName>
    <alternativeName>
        <fullName evidence="2">D-Ala-D-Ala ligase</fullName>
    </alternativeName>
    <alternativeName>
        <fullName evidence="2">D-alanylalanine synthetase</fullName>
    </alternativeName>
</protein>
<proteinExistence type="inferred from homology"/>
<organism>
    <name type="scientific">Clostridium botulinum (strain ATCC 19397 / Type A)</name>
    <dbReference type="NCBI Taxonomy" id="441770"/>
    <lineage>
        <taxon>Bacteria</taxon>
        <taxon>Bacillati</taxon>
        <taxon>Bacillota</taxon>
        <taxon>Clostridia</taxon>
        <taxon>Eubacteriales</taxon>
        <taxon>Clostridiaceae</taxon>
        <taxon>Clostridium</taxon>
    </lineage>
</organism>
<reference key="1">
    <citation type="journal article" date="2007" name="PLoS ONE">
        <title>Analysis of the neurotoxin complex genes in Clostridium botulinum A1-A4 and B1 strains: BoNT/A3, /Ba4 and /B1 clusters are located within plasmids.</title>
        <authorList>
            <person name="Smith T.J."/>
            <person name="Hill K.K."/>
            <person name="Foley B.T."/>
            <person name="Detter J.C."/>
            <person name="Munk A.C."/>
            <person name="Bruce D.C."/>
            <person name="Doggett N.A."/>
            <person name="Smith L.A."/>
            <person name="Marks J.D."/>
            <person name="Xie G."/>
            <person name="Brettin T.S."/>
        </authorList>
    </citation>
    <scope>NUCLEOTIDE SEQUENCE [LARGE SCALE GENOMIC DNA]</scope>
    <source>
        <strain>ATCC 19397 / Type A</strain>
    </source>
</reference>
<dbReference type="EC" id="6.3.2.4" evidence="2"/>
<dbReference type="EMBL" id="CP000726">
    <property type="protein sequence ID" value="ABS34289.1"/>
    <property type="molecule type" value="Genomic_DNA"/>
</dbReference>
<dbReference type="RefSeq" id="WP_003356163.1">
    <property type="nucleotide sequence ID" value="NC_009697.1"/>
</dbReference>
<dbReference type="SMR" id="A7FPH8"/>
<dbReference type="KEGG" id="cba:CLB_0493"/>
<dbReference type="HOGENOM" id="CLU_039268_1_1_9"/>
<dbReference type="UniPathway" id="UPA00219"/>
<dbReference type="GO" id="GO:0005737">
    <property type="term" value="C:cytoplasm"/>
    <property type="evidence" value="ECO:0007669"/>
    <property type="project" value="UniProtKB-SubCell"/>
</dbReference>
<dbReference type="GO" id="GO:0005524">
    <property type="term" value="F:ATP binding"/>
    <property type="evidence" value="ECO:0007669"/>
    <property type="project" value="UniProtKB-KW"/>
</dbReference>
<dbReference type="GO" id="GO:0008716">
    <property type="term" value="F:D-alanine-D-alanine ligase activity"/>
    <property type="evidence" value="ECO:0007669"/>
    <property type="project" value="UniProtKB-UniRule"/>
</dbReference>
<dbReference type="GO" id="GO:0046872">
    <property type="term" value="F:metal ion binding"/>
    <property type="evidence" value="ECO:0007669"/>
    <property type="project" value="UniProtKB-KW"/>
</dbReference>
<dbReference type="GO" id="GO:0071555">
    <property type="term" value="P:cell wall organization"/>
    <property type="evidence" value="ECO:0007669"/>
    <property type="project" value="UniProtKB-KW"/>
</dbReference>
<dbReference type="GO" id="GO:0009252">
    <property type="term" value="P:peptidoglycan biosynthetic process"/>
    <property type="evidence" value="ECO:0007669"/>
    <property type="project" value="UniProtKB-UniRule"/>
</dbReference>
<dbReference type="GO" id="GO:0008360">
    <property type="term" value="P:regulation of cell shape"/>
    <property type="evidence" value="ECO:0007669"/>
    <property type="project" value="UniProtKB-KW"/>
</dbReference>
<dbReference type="FunFam" id="3.30.1490.20:FF:000035">
    <property type="entry name" value="D-alanine--D-alanine ligase"/>
    <property type="match status" value="1"/>
</dbReference>
<dbReference type="FunFam" id="3.30.470.20:FF:000074">
    <property type="entry name" value="D-alanine--D-alanine ligase"/>
    <property type="match status" value="1"/>
</dbReference>
<dbReference type="FunFam" id="3.40.50.20:FF:000031">
    <property type="entry name" value="D-alanine--D-alanine ligase"/>
    <property type="match status" value="1"/>
</dbReference>
<dbReference type="Gene3D" id="3.40.50.20">
    <property type="match status" value="1"/>
</dbReference>
<dbReference type="Gene3D" id="3.30.1490.20">
    <property type="entry name" value="ATP-grasp fold, A domain"/>
    <property type="match status" value="1"/>
</dbReference>
<dbReference type="Gene3D" id="3.30.470.20">
    <property type="entry name" value="ATP-grasp fold, B domain"/>
    <property type="match status" value="1"/>
</dbReference>
<dbReference type="HAMAP" id="MF_00047">
    <property type="entry name" value="Dala_Dala_lig"/>
    <property type="match status" value="1"/>
</dbReference>
<dbReference type="InterPro" id="IPR011761">
    <property type="entry name" value="ATP-grasp"/>
</dbReference>
<dbReference type="InterPro" id="IPR013815">
    <property type="entry name" value="ATP_grasp_subdomain_1"/>
</dbReference>
<dbReference type="InterPro" id="IPR000291">
    <property type="entry name" value="D-Ala_lig_Van_CS"/>
</dbReference>
<dbReference type="InterPro" id="IPR005905">
    <property type="entry name" value="D_ala_D_ala"/>
</dbReference>
<dbReference type="InterPro" id="IPR011095">
    <property type="entry name" value="Dala_Dala_lig_C"/>
</dbReference>
<dbReference type="InterPro" id="IPR011127">
    <property type="entry name" value="Dala_Dala_lig_N"/>
</dbReference>
<dbReference type="InterPro" id="IPR016185">
    <property type="entry name" value="PreATP-grasp_dom_sf"/>
</dbReference>
<dbReference type="NCBIfam" id="TIGR01205">
    <property type="entry name" value="D_ala_D_alaTIGR"/>
    <property type="match status" value="1"/>
</dbReference>
<dbReference type="NCBIfam" id="NF002378">
    <property type="entry name" value="PRK01372.1"/>
    <property type="match status" value="1"/>
</dbReference>
<dbReference type="PANTHER" id="PTHR23132">
    <property type="entry name" value="D-ALANINE--D-ALANINE LIGASE"/>
    <property type="match status" value="1"/>
</dbReference>
<dbReference type="PANTHER" id="PTHR23132:SF23">
    <property type="entry name" value="D-ALANINE--D-ALANINE LIGASE B"/>
    <property type="match status" value="1"/>
</dbReference>
<dbReference type="Pfam" id="PF07478">
    <property type="entry name" value="Dala_Dala_lig_C"/>
    <property type="match status" value="1"/>
</dbReference>
<dbReference type="Pfam" id="PF01820">
    <property type="entry name" value="Dala_Dala_lig_N"/>
    <property type="match status" value="1"/>
</dbReference>
<dbReference type="PIRSF" id="PIRSF039102">
    <property type="entry name" value="Ddl/VanB"/>
    <property type="match status" value="1"/>
</dbReference>
<dbReference type="SMART" id="SM01209">
    <property type="entry name" value="GARS_A"/>
    <property type="match status" value="1"/>
</dbReference>
<dbReference type="SUPFAM" id="SSF56059">
    <property type="entry name" value="Glutathione synthetase ATP-binding domain-like"/>
    <property type="match status" value="1"/>
</dbReference>
<dbReference type="SUPFAM" id="SSF52440">
    <property type="entry name" value="PreATP-grasp domain"/>
    <property type="match status" value="1"/>
</dbReference>
<dbReference type="PROSITE" id="PS50975">
    <property type="entry name" value="ATP_GRASP"/>
    <property type="match status" value="1"/>
</dbReference>
<dbReference type="PROSITE" id="PS00843">
    <property type="entry name" value="DALA_DALA_LIGASE_1"/>
    <property type="match status" value="1"/>
</dbReference>
<dbReference type="PROSITE" id="PS00844">
    <property type="entry name" value="DALA_DALA_LIGASE_2"/>
    <property type="match status" value="1"/>
</dbReference>
<gene>
    <name evidence="2" type="primary">ddl</name>
    <name type="ordered locus">CLB_0493</name>
</gene>
<evidence type="ECO:0000250" key="1"/>
<evidence type="ECO:0000255" key="2">
    <source>
        <dbReference type="HAMAP-Rule" id="MF_00047"/>
    </source>
</evidence>
<sequence>MKIGVIMGGISTEREVSLNSGREVIKYLELLEHEIIPIIIDKKEDVMEKAKGIDFAFLALHGKFGEDGTVQSVLQTLDIPYSGCGPLTSAICMDKDMTKKILKYANINTADWVNVSSVENIDYEAIEKIGYPVFVKPNSGGSSVATNLVKDKEGIKEAVELALKYDKEVMIENYTKGEEITCCMLNGKMLPVLAIRPHAEFFDYTAKYADGGSDEVVIELEENLHKKVEEMALACWKELKCEVYVRVDMIVKDGIPYVLELNTLPGMTKNSLFPKSANAVGISFAELLNSIVKYSLEVER</sequence>